<feature type="chain" id="PRO_0000253921" description="Uncharacterized protein R555">
    <location>
        <begin position="1"/>
        <end position="1351"/>
    </location>
</feature>
<feature type="region of interest" description="Disordered" evidence="1">
    <location>
        <begin position="1"/>
        <end position="31"/>
    </location>
</feature>
<feature type="compositionally biased region" description="Basic and acidic residues" evidence="1">
    <location>
        <begin position="1"/>
        <end position="17"/>
    </location>
</feature>
<feature type="compositionally biased region" description="Low complexity" evidence="1">
    <location>
        <begin position="19"/>
        <end position="31"/>
    </location>
</feature>
<evidence type="ECO:0000256" key="1">
    <source>
        <dbReference type="SAM" id="MobiDB-lite"/>
    </source>
</evidence>
<reference key="1">
    <citation type="journal article" date="2004" name="Science">
        <title>The 1.2-megabase genome sequence of Mimivirus.</title>
        <authorList>
            <person name="Raoult D."/>
            <person name="Audic S."/>
            <person name="Robert C."/>
            <person name="Abergel C."/>
            <person name="Renesto P."/>
            <person name="Ogata H."/>
            <person name="La Scola B."/>
            <person name="Susan M."/>
            <person name="Claverie J.-M."/>
        </authorList>
    </citation>
    <scope>NUCLEOTIDE SEQUENCE [LARGE SCALE GENOMIC DNA]</scope>
    <source>
        <strain>Rowbotham-Bradford</strain>
    </source>
</reference>
<dbReference type="EMBL" id="AY653733">
    <property type="protein sequence ID" value="AAV50819.1"/>
    <property type="molecule type" value="Genomic_DNA"/>
</dbReference>
<dbReference type="KEGG" id="vg:9925190"/>
<dbReference type="Proteomes" id="UP000001134">
    <property type="component" value="Genome"/>
</dbReference>
<dbReference type="GO" id="GO:0016887">
    <property type="term" value="F:ATP hydrolysis activity"/>
    <property type="evidence" value="ECO:0007669"/>
    <property type="project" value="InterPro"/>
</dbReference>
<dbReference type="GO" id="GO:0006302">
    <property type="term" value="P:double-strand break repair"/>
    <property type="evidence" value="ECO:0007669"/>
    <property type="project" value="InterPro"/>
</dbReference>
<dbReference type="Gene3D" id="3.60.21.10">
    <property type="match status" value="1"/>
</dbReference>
<dbReference type="Gene3D" id="3.40.50.300">
    <property type="entry name" value="P-loop containing nucleotide triphosphate hydrolases"/>
    <property type="match status" value="2"/>
</dbReference>
<dbReference type="InterPro" id="IPR004843">
    <property type="entry name" value="Calcineurin-like_PHP_ApaH"/>
</dbReference>
<dbReference type="InterPro" id="IPR029052">
    <property type="entry name" value="Metallo-depent_PP-like"/>
</dbReference>
<dbReference type="InterPro" id="IPR027417">
    <property type="entry name" value="P-loop_NTPase"/>
</dbReference>
<dbReference type="InterPro" id="IPR038729">
    <property type="entry name" value="Rad50/SbcC_AAA"/>
</dbReference>
<dbReference type="PANTHER" id="PTHR32114">
    <property type="entry name" value="ABC TRANSPORTER ABCH.3"/>
    <property type="match status" value="1"/>
</dbReference>
<dbReference type="PANTHER" id="PTHR32114:SF2">
    <property type="entry name" value="ABC TRANSPORTER ABCH.3"/>
    <property type="match status" value="1"/>
</dbReference>
<dbReference type="Pfam" id="PF13476">
    <property type="entry name" value="AAA_23"/>
    <property type="match status" value="1"/>
</dbReference>
<dbReference type="Pfam" id="PF00149">
    <property type="entry name" value="Metallophos"/>
    <property type="match status" value="1"/>
</dbReference>
<dbReference type="SUPFAM" id="SSF56300">
    <property type="entry name" value="Metallo-dependent phosphatases"/>
    <property type="match status" value="1"/>
</dbReference>
<dbReference type="SUPFAM" id="SSF52540">
    <property type="entry name" value="P-loop containing nucleoside triphosphate hydrolases"/>
    <property type="match status" value="1"/>
</dbReference>
<accession>Q5UR33</accession>
<protein>
    <recommendedName>
        <fullName>Uncharacterized protein R555</fullName>
    </recommendedName>
</protein>
<sequence length="1351" mass="157914">MSKKDSKNSPKKSKDTNSDESSSSNAETSSDKSITYLKLRDDSKTEIKYIYHMSDIHIRKLQRHDEYKEVFDRTYKILKSEITSNDSIIVLTGDIMHMKTEMSPEIIDITSNFFKTLNEIAPVILIPGNHDCNLSNKNRLDALSPIIENTYKFPDLFYLKKSGLYQFYNIVFGVTSVFEDDLVTADKITKEHWNKIKQPNKFKIALYHGPVHNAKTDVGYRMNNEQLLAEDFKGYHYVMLGDIHRFQYMNENKTIAYSGSLIQQSYGESLHGHGILKWSLVEKSSELIEVRNDYGYCTVKIIDGQMIETKIPKKPRVRFILENTNQIQYQEVINNLEKQYLIQEIVKESNLKTKYNNSSPSKKDKPTAYATQETMVNSYMEKRGLDEKTTKGIIELHKKIYQKILANNKEKVVDVMHNSTKTQKWRLLELRFSNALSYGKDNVIDFRNYDPNKIIGIFAPNHYGKSAVLDIILFCLFDKCSRGDRRDILNKNEKNMSCSILLSIGSQQYYIERIGVRNKNGLTVKIDVNFYSITTNEKGKETMTKLNGLDKNETNRKIAELIGDYNDYLTTCFSLQTKNSNFIDMTQLQKKEYLNDILKLNVFEECHNYAKDKLKDLTGQLKVLEQKIGQKSLDDFKSSVRKITEEMSVINSEIKWIGNNLLPQVDIVINKNPVVPRIYYNELLDYDLTDVKSIIRTQTNILKQLSDKQNNNEIGTISVEITSKKQQLNEISTKFDEEKIKLETQLGELRTNKENLLKKLIKIPKINSDEIETHKKTVQECEDRINIIDKVFEEHENDELTDKMSRIDELKALISRLRKSLAVTNNNDYSHLDKLYEELINVDTKYRQCISNVLNPKKILNQQEKNHLSEIVKIKRYFTDNLIDNNGLLGDYDKGKSNLNDELIEKIMSKNNQIIDQENEWFEQADEYLKQDNSGIIDVDDIIKQRSKIQEQIRKILLNILNKKENQIIESKINKAQTELDALAEFTGTKKEIDNLVQEKKLLKDKIVFLKEKISQNELAVQNQKSNDEIKKQINEIESKIDQITCIIKDNTSEINTLKQYISEKESIIKKHQKQIDQTNKLNHHYKLLDKYYLEYTNWNHKNSTREKWLKTRTEMNDKLNDLNKNLDKKQVELDMFKKEVEQYIESRKEFDDKSTEVNLYQHYVQIMNCNGLPYEMLKTYLPLIESDVNEILHSMVNFNIEFMFYDDSKLEEQKTKQLKSNMGSVDINICYHNMKPYNVQLASGFERFIIGLAIRMTLCQISLTSKPNFLIIDEGWSCLDSDNLSNVGTIMNYIKTQYEHVIIISHLDELKSQADYIISIDKVKGYSRIIENKKTIKKIINKKPNKIIEL</sequence>
<name>YR555_MIMIV</name>
<proteinExistence type="predicted"/>
<keyword id="KW-1185">Reference proteome</keyword>
<gene>
    <name type="ordered locus">MIMI_R555</name>
</gene>
<organism>
    <name type="scientific">Acanthamoeba polyphaga mimivirus</name>
    <name type="common">APMV</name>
    <dbReference type="NCBI Taxonomy" id="212035"/>
    <lineage>
        <taxon>Viruses</taxon>
        <taxon>Varidnaviria</taxon>
        <taxon>Bamfordvirae</taxon>
        <taxon>Nucleocytoviricota</taxon>
        <taxon>Megaviricetes</taxon>
        <taxon>Imitervirales</taxon>
        <taxon>Mimiviridae</taxon>
        <taxon>Megamimivirinae</taxon>
        <taxon>Mimivirus</taxon>
        <taxon>Mimivirus bradfordmassiliense</taxon>
    </lineage>
</organism>
<organismHost>
    <name type="scientific">Acanthamoeba polyphaga</name>
    <name type="common">Amoeba</name>
    <dbReference type="NCBI Taxonomy" id="5757"/>
</organismHost>